<gene>
    <name evidence="1" type="primary">zapD</name>
    <name type="ordered locus">EcE24377A_0104</name>
</gene>
<evidence type="ECO:0000255" key="1">
    <source>
        <dbReference type="HAMAP-Rule" id="MF_01092"/>
    </source>
</evidence>
<sequence length="247" mass="28318">MQTQVLFEHPLNEKMRTWLRIEFLIQQLTVNLPIVDHAGALHFFRNVSELLDVFERGEVRTELLKELDRQQRKLQTWIGVPGVDQSRIEALIQQLKAAGSVLISAPRIGQFLREDRLIALVRQRLSIPGGCCSFDLPTLHIWLHLPQAQRDSQVETWIASLNPLTQALTMVLDLIRQSAPFRKQTSLNGFYQDNGGDADLLRLNLLLDSQLYPQISGHKSRFAIRFMPLDTENGQVPERLDFELACC</sequence>
<organism>
    <name type="scientific">Escherichia coli O139:H28 (strain E24377A / ETEC)</name>
    <dbReference type="NCBI Taxonomy" id="331111"/>
    <lineage>
        <taxon>Bacteria</taxon>
        <taxon>Pseudomonadati</taxon>
        <taxon>Pseudomonadota</taxon>
        <taxon>Gammaproteobacteria</taxon>
        <taxon>Enterobacterales</taxon>
        <taxon>Enterobacteriaceae</taxon>
        <taxon>Escherichia</taxon>
    </lineage>
</organism>
<accession>A7ZHJ3</accession>
<comment type="function">
    <text evidence="1">Cell division factor that enhances FtsZ-ring assembly. Directly interacts with FtsZ and promotes bundling of FtsZ protofilaments, with a reduction in FtsZ GTPase activity.</text>
</comment>
<comment type="subunit">
    <text evidence="1">Interacts with FtsZ.</text>
</comment>
<comment type="subcellular location">
    <subcellularLocation>
        <location evidence="1">Cytoplasm</location>
    </subcellularLocation>
    <text evidence="1">Localizes to mid-cell in an FtsZ-dependent manner.</text>
</comment>
<comment type="similarity">
    <text evidence="1">Belongs to the ZapD family.</text>
</comment>
<feature type="chain" id="PRO_1000064906" description="Cell division protein ZapD">
    <location>
        <begin position="1"/>
        <end position="247"/>
    </location>
</feature>
<name>ZAPD_ECO24</name>
<protein>
    <recommendedName>
        <fullName evidence="1">Cell division protein ZapD</fullName>
    </recommendedName>
    <alternativeName>
        <fullName evidence="1">Z ring-associated protein D</fullName>
    </alternativeName>
</protein>
<reference key="1">
    <citation type="journal article" date="2008" name="J. Bacteriol.">
        <title>The pangenome structure of Escherichia coli: comparative genomic analysis of E. coli commensal and pathogenic isolates.</title>
        <authorList>
            <person name="Rasko D.A."/>
            <person name="Rosovitz M.J."/>
            <person name="Myers G.S.A."/>
            <person name="Mongodin E.F."/>
            <person name="Fricke W.F."/>
            <person name="Gajer P."/>
            <person name="Crabtree J."/>
            <person name="Sebaihia M."/>
            <person name="Thomson N.R."/>
            <person name="Chaudhuri R."/>
            <person name="Henderson I.R."/>
            <person name="Sperandio V."/>
            <person name="Ravel J."/>
        </authorList>
    </citation>
    <scope>NUCLEOTIDE SEQUENCE [LARGE SCALE GENOMIC DNA]</scope>
    <source>
        <strain>E24377A / ETEC</strain>
    </source>
</reference>
<dbReference type="EMBL" id="CP000800">
    <property type="protein sequence ID" value="ABV18705.1"/>
    <property type="molecule type" value="Genomic_DNA"/>
</dbReference>
<dbReference type="RefSeq" id="WP_001194730.1">
    <property type="nucleotide sequence ID" value="NC_009801.1"/>
</dbReference>
<dbReference type="SMR" id="A7ZHJ3"/>
<dbReference type="KEGG" id="ecw:EcE24377A_0104"/>
<dbReference type="HOGENOM" id="CLU_076303_0_0_6"/>
<dbReference type="Proteomes" id="UP000001122">
    <property type="component" value="Chromosome"/>
</dbReference>
<dbReference type="GO" id="GO:0032153">
    <property type="term" value="C:cell division site"/>
    <property type="evidence" value="ECO:0007669"/>
    <property type="project" value="TreeGrafter"/>
</dbReference>
<dbReference type="GO" id="GO:0005737">
    <property type="term" value="C:cytoplasm"/>
    <property type="evidence" value="ECO:0007669"/>
    <property type="project" value="UniProtKB-SubCell"/>
</dbReference>
<dbReference type="GO" id="GO:0000917">
    <property type="term" value="P:division septum assembly"/>
    <property type="evidence" value="ECO:0007669"/>
    <property type="project" value="UniProtKB-KW"/>
</dbReference>
<dbReference type="GO" id="GO:0043093">
    <property type="term" value="P:FtsZ-dependent cytokinesis"/>
    <property type="evidence" value="ECO:0007669"/>
    <property type="project" value="UniProtKB-UniRule"/>
</dbReference>
<dbReference type="FunFam" id="1.10.3900.10:FF:000001">
    <property type="entry name" value="Cell division protein ZapD"/>
    <property type="match status" value="1"/>
</dbReference>
<dbReference type="FunFam" id="2.60.440.10:FF:000001">
    <property type="entry name" value="Cell division protein ZapD"/>
    <property type="match status" value="1"/>
</dbReference>
<dbReference type="Gene3D" id="1.10.3900.10">
    <property type="entry name" value="YacF-like"/>
    <property type="match status" value="1"/>
</dbReference>
<dbReference type="Gene3D" id="2.60.440.10">
    <property type="entry name" value="YacF-like domains"/>
    <property type="match status" value="1"/>
</dbReference>
<dbReference type="HAMAP" id="MF_01092">
    <property type="entry name" value="ZapD"/>
    <property type="match status" value="1"/>
</dbReference>
<dbReference type="InterPro" id="IPR009777">
    <property type="entry name" value="ZapD"/>
</dbReference>
<dbReference type="InterPro" id="IPR027462">
    <property type="entry name" value="ZapD_C"/>
</dbReference>
<dbReference type="InterPro" id="IPR036268">
    <property type="entry name" value="ZapD_sf"/>
</dbReference>
<dbReference type="NCBIfam" id="NF003653">
    <property type="entry name" value="PRK05287.1-1"/>
    <property type="match status" value="1"/>
</dbReference>
<dbReference type="NCBIfam" id="NF003655">
    <property type="entry name" value="PRK05287.1-3"/>
    <property type="match status" value="1"/>
</dbReference>
<dbReference type="PANTHER" id="PTHR39455">
    <property type="entry name" value="CELL DIVISION PROTEIN ZAPD"/>
    <property type="match status" value="1"/>
</dbReference>
<dbReference type="PANTHER" id="PTHR39455:SF1">
    <property type="entry name" value="CELL DIVISION PROTEIN ZAPD"/>
    <property type="match status" value="1"/>
</dbReference>
<dbReference type="Pfam" id="PF07072">
    <property type="entry name" value="ZapD"/>
    <property type="match status" value="1"/>
</dbReference>
<dbReference type="SUPFAM" id="SSF160950">
    <property type="entry name" value="YacF-like"/>
    <property type="match status" value="1"/>
</dbReference>
<keyword id="KW-0131">Cell cycle</keyword>
<keyword id="KW-0132">Cell division</keyword>
<keyword id="KW-0963">Cytoplasm</keyword>
<keyword id="KW-1185">Reference proteome</keyword>
<keyword id="KW-0717">Septation</keyword>
<proteinExistence type="inferred from homology"/>